<reference key="1">
    <citation type="journal article" date="2007" name="PLoS ONE">
        <title>Analysis of the neurotoxin complex genes in Clostridium botulinum A1-A4 and B1 strains: BoNT/A3, /Ba4 and /B1 clusters are located within plasmids.</title>
        <authorList>
            <person name="Smith T.J."/>
            <person name="Hill K.K."/>
            <person name="Foley B.T."/>
            <person name="Detter J.C."/>
            <person name="Munk A.C."/>
            <person name="Bruce D.C."/>
            <person name="Doggett N.A."/>
            <person name="Smith L.A."/>
            <person name="Marks J.D."/>
            <person name="Xie G."/>
            <person name="Brettin T.S."/>
        </authorList>
    </citation>
    <scope>NUCLEOTIDE SEQUENCE [LARGE SCALE GENOMIC DNA]</scope>
    <source>
        <strain>Loch Maree / Type A3</strain>
    </source>
</reference>
<dbReference type="EC" id="2.7.7.6" evidence="1"/>
<dbReference type="EMBL" id="CP000962">
    <property type="protein sequence ID" value="ACA55587.1"/>
    <property type="molecule type" value="Genomic_DNA"/>
</dbReference>
<dbReference type="RefSeq" id="WP_003357472.1">
    <property type="nucleotide sequence ID" value="NC_010520.1"/>
</dbReference>
<dbReference type="SMR" id="B1KSJ6"/>
<dbReference type="KEGG" id="cbl:CLK_2895"/>
<dbReference type="HOGENOM" id="CLU_053084_0_1_9"/>
<dbReference type="GO" id="GO:0005737">
    <property type="term" value="C:cytoplasm"/>
    <property type="evidence" value="ECO:0007669"/>
    <property type="project" value="UniProtKB-ARBA"/>
</dbReference>
<dbReference type="GO" id="GO:0000428">
    <property type="term" value="C:DNA-directed RNA polymerase complex"/>
    <property type="evidence" value="ECO:0007669"/>
    <property type="project" value="UniProtKB-KW"/>
</dbReference>
<dbReference type="GO" id="GO:0003677">
    <property type="term" value="F:DNA binding"/>
    <property type="evidence" value="ECO:0007669"/>
    <property type="project" value="UniProtKB-UniRule"/>
</dbReference>
<dbReference type="GO" id="GO:0003899">
    <property type="term" value="F:DNA-directed RNA polymerase activity"/>
    <property type="evidence" value="ECO:0007669"/>
    <property type="project" value="UniProtKB-UniRule"/>
</dbReference>
<dbReference type="GO" id="GO:0046983">
    <property type="term" value="F:protein dimerization activity"/>
    <property type="evidence" value="ECO:0007669"/>
    <property type="project" value="InterPro"/>
</dbReference>
<dbReference type="GO" id="GO:0006351">
    <property type="term" value="P:DNA-templated transcription"/>
    <property type="evidence" value="ECO:0007669"/>
    <property type="project" value="UniProtKB-UniRule"/>
</dbReference>
<dbReference type="CDD" id="cd06928">
    <property type="entry name" value="RNAP_alpha_NTD"/>
    <property type="match status" value="1"/>
</dbReference>
<dbReference type="FunFam" id="1.10.150.20:FF:000001">
    <property type="entry name" value="DNA-directed RNA polymerase subunit alpha"/>
    <property type="match status" value="1"/>
</dbReference>
<dbReference type="FunFam" id="2.170.120.12:FF:000001">
    <property type="entry name" value="DNA-directed RNA polymerase subunit alpha"/>
    <property type="match status" value="1"/>
</dbReference>
<dbReference type="Gene3D" id="1.10.150.20">
    <property type="entry name" value="5' to 3' exonuclease, C-terminal subdomain"/>
    <property type="match status" value="1"/>
</dbReference>
<dbReference type="Gene3D" id="2.170.120.12">
    <property type="entry name" value="DNA-directed RNA polymerase, insert domain"/>
    <property type="match status" value="1"/>
</dbReference>
<dbReference type="Gene3D" id="3.30.1360.10">
    <property type="entry name" value="RNA polymerase, RBP11-like subunit"/>
    <property type="match status" value="1"/>
</dbReference>
<dbReference type="HAMAP" id="MF_00059">
    <property type="entry name" value="RNApol_bact_RpoA"/>
    <property type="match status" value="1"/>
</dbReference>
<dbReference type="InterPro" id="IPR011262">
    <property type="entry name" value="DNA-dir_RNA_pol_insert"/>
</dbReference>
<dbReference type="InterPro" id="IPR011263">
    <property type="entry name" value="DNA-dir_RNA_pol_RpoA/D/Rpb3"/>
</dbReference>
<dbReference type="InterPro" id="IPR011773">
    <property type="entry name" value="DNA-dir_RpoA"/>
</dbReference>
<dbReference type="InterPro" id="IPR036603">
    <property type="entry name" value="RBP11-like"/>
</dbReference>
<dbReference type="InterPro" id="IPR011260">
    <property type="entry name" value="RNAP_asu_C"/>
</dbReference>
<dbReference type="InterPro" id="IPR036643">
    <property type="entry name" value="RNApol_insert_sf"/>
</dbReference>
<dbReference type="NCBIfam" id="NF003513">
    <property type="entry name" value="PRK05182.1-2"/>
    <property type="match status" value="1"/>
</dbReference>
<dbReference type="NCBIfam" id="NF003515">
    <property type="entry name" value="PRK05182.2-1"/>
    <property type="match status" value="1"/>
</dbReference>
<dbReference type="NCBIfam" id="NF003516">
    <property type="entry name" value="PRK05182.2-2"/>
    <property type="match status" value="1"/>
</dbReference>
<dbReference type="NCBIfam" id="NF003519">
    <property type="entry name" value="PRK05182.2-5"/>
    <property type="match status" value="1"/>
</dbReference>
<dbReference type="NCBIfam" id="TIGR02027">
    <property type="entry name" value="rpoA"/>
    <property type="match status" value="1"/>
</dbReference>
<dbReference type="Pfam" id="PF01000">
    <property type="entry name" value="RNA_pol_A_bac"/>
    <property type="match status" value="1"/>
</dbReference>
<dbReference type="Pfam" id="PF03118">
    <property type="entry name" value="RNA_pol_A_CTD"/>
    <property type="match status" value="1"/>
</dbReference>
<dbReference type="Pfam" id="PF01193">
    <property type="entry name" value="RNA_pol_L"/>
    <property type="match status" value="1"/>
</dbReference>
<dbReference type="SMART" id="SM00662">
    <property type="entry name" value="RPOLD"/>
    <property type="match status" value="1"/>
</dbReference>
<dbReference type="SUPFAM" id="SSF47789">
    <property type="entry name" value="C-terminal domain of RNA polymerase alpha subunit"/>
    <property type="match status" value="1"/>
</dbReference>
<dbReference type="SUPFAM" id="SSF56553">
    <property type="entry name" value="Insert subdomain of RNA polymerase alpha subunit"/>
    <property type="match status" value="1"/>
</dbReference>
<dbReference type="SUPFAM" id="SSF55257">
    <property type="entry name" value="RBP11-like subunits of RNA polymerase"/>
    <property type="match status" value="1"/>
</dbReference>
<gene>
    <name evidence="1" type="primary">rpoA</name>
    <name type="ordered locus">CLK_2895</name>
</gene>
<sequence length="315" mass="35397">MLEIEKPKIECVENAEDGSYGKFVIEPLERGYGITLGNALRRILLSSLPGVAADHIKIDSVLHEFSTVQGVKEDVTELILNIKCLALTMNGEGPKTIYIDEVGPKEVTAADIKTDGDVEVINKDLHIATLDENGKMYMEINVNRGRGYVTQNKNKTKDMPIGSIAVDSIYTPVKRVNFSVENTRVGQITDYDKLTIEVWTNGTIRPEEAVSLSAKILIEHFKLFMTLTDHADDMEIMVEKEEDKKEKVLEMTIEELDLSVRSYNCLKRAGINTVQELCERSMDDMMKVRNLGKKSLEEVEQKLEALGLGLRKSED</sequence>
<protein>
    <recommendedName>
        <fullName evidence="1">DNA-directed RNA polymerase subunit alpha</fullName>
        <shortName evidence="1">RNAP subunit alpha</shortName>
        <ecNumber evidence="1">2.7.7.6</ecNumber>
    </recommendedName>
    <alternativeName>
        <fullName evidence="1">RNA polymerase subunit alpha</fullName>
    </alternativeName>
    <alternativeName>
        <fullName evidence="1">Transcriptase subunit alpha</fullName>
    </alternativeName>
</protein>
<name>RPOA_CLOBM</name>
<accession>B1KSJ6</accession>
<feature type="chain" id="PRO_1000091941" description="DNA-directed RNA polymerase subunit alpha">
    <location>
        <begin position="1"/>
        <end position="315"/>
    </location>
</feature>
<feature type="region of interest" description="Alpha N-terminal domain (alpha-NTD)" evidence="1">
    <location>
        <begin position="1"/>
        <end position="228"/>
    </location>
</feature>
<feature type="region of interest" description="Alpha C-terminal domain (alpha-CTD)" evidence="1">
    <location>
        <begin position="245"/>
        <end position="315"/>
    </location>
</feature>
<proteinExistence type="inferred from homology"/>
<keyword id="KW-0240">DNA-directed RNA polymerase</keyword>
<keyword id="KW-0548">Nucleotidyltransferase</keyword>
<keyword id="KW-0804">Transcription</keyword>
<keyword id="KW-0808">Transferase</keyword>
<evidence type="ECO:0000255" key="1">
    <source>
        <dbReference type="HAMAP-Rule" id="MF_00059"/>
    </source>
</evidence>
<organism>
    <name type="scientific">Clostridium botulinum (strain Loch Maree / Type A3)</name>
    <dbReference type="NCBI Taxonomy" id="498214"/>
    <lineage>
        <taxon>Bacteria</taxon>
        <taxon>Bacillati</taxon>
        <taxon>Bacillota</taxon>
        <taxon>Clostridia</taxon>
        <taxon>Eubacteriales</taxon>
        <taxon>Clostridiaceae</taxon>
        <taxon>Clostridium</taxon>
    </lineage>
</organism>
<comment type="function">
    <text evidence="1">DNA-dependent RNA polymerase catalyzes the transcription of DNA into RNA using the four ribonucleoside triphosphates as substrates.</text>
</comment>
<comment type="catalytic activity">
    <reaction evidence="1">
        <text>RNA(n) + a ribonucleoside 5'-triphosphate = RNA(n+1) + diphosphate</text>
        <dbReference type="Rhea" id="RHEA:21248"/>
        <dbReference type="Rhea" id="RHEA-COMP:14527"/>
        <dbReference type="Rhea" id="RHEA-COMP:17342"/>
        <dbReference type="ChEBI" id="CHEBI:33019"/>
        <dbReference type="ChEBI" id="CHEBI:61557"/>
        <dbReference type="ChEBI" id="CHEBI:140395"/>
        <dbReference type="EC" id="2.7.7.6"/>
    </reaction>
</comment>
<comment type="subunit">
    <text evidence="1">Homodimer. The RNAP catalytic core consists of 2 alpha, 1 beta, 1 beta' and 1 omega subunit. When a sigma factor is associated with the core the holoenzyme is formed, which can initiate transcription.</text>
</comment>
<comment type="domain">
    <text evidence="1">The N-terminal domain is essential for RNAP assembly and basal transcription, whereas the C-terminal domain is involved in interaction with transcriptional regulators and with upstream promoter elements.</text>
</comment>
<comment type="similarity">
    <text evidence="1">Belongs to the RNA polymerase alpha chain family.</text>
</comment>